<accession>Q8E9L5</accession>
<organism>
    <name type="scientific">Shewanella oneidensis (strain ATCC 700550 / JCM 31522 / CIP 106686 / LMG 19005 / NCIMB 14063 / MR-1)</name>
    <dbReference type="NCBI Taxonomy" id="211586"/>
    <lineage>
        <taxon>Bacteria</taxon>
        <taxon>Pseudomonadati</taxon>
        <taxon>Pseudomonadota</taxon>
        <taxon>Gammaproteobacteria</taxon>
        <taxon>Alteromonadales</taxon>
        <taxon>Shewanellaceae</taxon>
        <taxon>Shewanella</taxon>
    </lineage>
</organism>
<feature type="chain" id="PRO_0000110735" description="Orotate phosphoribosyltransferase">
    <location>
        <begin position="1"/>
        <end position="215"/>
    </location>
</feature>
<feature type="binding site" description="in other chain" evidence="1">
    <location>
        <position position="26"/>
    </location>
    <ligand>
        <name>5-phospho-alpha-D-ribose 1-diphosphate</name>
        <dbReference type="ChEBI" id="CHEBI:58017"/>
        <note>ligand shared between dimeric partners</note>
    </ligand>
</feature>
<feature type="binding site" evidence="1">
    <location>
        <begin position="34"/>
        <end position="35"/>
    </location>
    <ligand>
        <name>orotate</name>
        <dbReference type="ChEBI" id="CHEBI:30839"/>
    </ligand>
</feature>
<feature type="binding site" description="in other chain" evidence="1">
    <location>
        <begin position="72"/>
        <end position="73"/>
    </location>
    <ligand>
        <name>5-phospho-alpha-D-ribose 1-diphosphate</name>
        <dbReference type="ChEBI" id="CHEBI:58017"/>
        <note>ligand shared between dimeric partners</note>
    </ligand>
</feature>
<feature type="binding site" evidence="1">
    <location>
        <position position="99"/>
    </location>
    <ligand>
        <name>5-phospho-alpha-D-ribose 1-diphosphate</name>
        <dbReference type="ChEBI" id="CHEBI:58017"/>
        <note>ligand shared between dimeric partners</note>
    </ligand>
</feature>
<feature type="binding site" description="in other chain" evidence="1">
    <location>
        <position position="100"/>
    </location>
    <ligand>
        <name>5-phospho-alpha-D-ribose 1-diphosphate</name>
        <dbReference type="ChEBI" id="CHEBI:58017"/>
        <note>ligand shared between dimeric partners</note>
    </ligand>
</feature>
<feature type="binding site" evidence="1">
    <location>
        <position position="103"/>
    </location>
    <ligand>
        <name>5-phospho-alpha-D-ribose 1-diphosphate</name>
        <dbReference type="ChEBI" id="CHEBI:58017"/>
        <note>ligand shared between dimeric partners</note>
    </ligand>
</feature>
<feature type="binding site" evidence="1">
    <location>
        <position position="105"/>
    </location>
    <ligand>
        <name>5-phospho-alpha-D-ribose 1-diphosphate</name>
        <dbReference type="ChEBI" id="CHEBI:58017"/>
        <note>ligand shared between dimeric partners</note>
    </ligand>
</feature>
<feature type="binding site" description="in other chain" evidence="1">
    <location>
        <begin position="124"/>
        <end position="132"/>
    </location>
    <ligand>
        <name>5-phospho-alpha-D-ribose 1-diphosphate</name>
        <dbReference type="ChEBI" id="CHEBI:58017"/>
        <note>ligand shared between dimeric partners</note>
    </ligand>
</feature>
<feature type="binding site" evidence="1">
    <location>
        <position position="128"/>
    </location>
    <ligand>
        <name>orotate</name>
        <dbReference type="ChEBI" id="CHEBI:30839"/>
    </ligand>
</feature>
<feature type="binding site" evidence="1">
    <location>
        <position position="156"/>
    </location>
    <ligand>
        <name>orotate</name>
        <dbReference type="ChEBI" id="CHEBI:30839"/>
    </ligand>
</feature>
<sequence length="215" mass="23828">MKAYQREFIEFALERQVLRFGEFTLKSGRISPYFFNAGLFNTGRDLARLGRFYAAALVDSGIDYDLLFGPAYKGIPIATTTAVALCEHHNIDIPYCFNRKEKKDHGEGGSLVGSELKGRVMLVDDVITAGTAIRESMEIIEAHQAQLAGVLIALDRQEKGKGELSAIQEVERDFGCGIVAIIKLADLISYLSEKPRMEAQLAAVSQYREQYGIEA</sequence>
<dbReference type="EC" id="2.4.2.10" evidence="1"/>
<dbReference type="EMBL" id="AE014299">
    <property type="protein sequence ID" value="AAN57226.1"/>
    <property type="molecule type" value="Genomic_DNA"/>
</dbReference>
<dbReference type="RefSeq" id="NP_719782.1">
    <property type="nucleotide sequence ID" value="NC_004347.2"/>
</dbReference>
<dbReference type="RefSeq" id="WP_011073929.1">
    <property type="nucleotide sequence ID" value="NC_004347.2"/>
</dbReference>
<dbReference type="SMR" id="Q8E9L5"/>
<dbReference type="STRING" id="211586.SO_4255"/>
<dbReference type="PaxDb" id="211586-SO_4255"/>
<dbReference type="KEGG" id="son:SO_4255"/>
<dbReference type="PATRIC" id="fig|211586.12.peg.4114"/>
<dbReference type="eggNOG" id="COG0461">
    <property type="taxonomic scope" value="Bacteria"/>
</dbReference>
<dbReference type="HOGENOM" id="CLU_074878_0_1_6"/>
<dbReference type="OrthoDB" id="9779060at2"/>
<dbReference type="PhylomeDB" id="Q8E9L5"/>
<dbReference type="BioCyc" id="SONE211586:G1GMP-3930-MONOMER"/>
<dbReference type="UniPathway" id="UPA00070">
    <property type="reaction ID" value="UER00119"/>
</dbReference>
<dbReference type="Proteomes" id="UP000008186">
    <property type="component" value="Chromosome"/>
</dbReference>
<dbReference type="GO" id="GO:0005737">
    <property type="term" value="C:cytoplasm"/>
    <property type="evidence" value="ECO:0000318"/>
    <property type="project" value="GO_Central"/>
</dbReference>
<dbReference type="GO" id="GO:0000287">
    <property type="term" value="F:magnesium ion binding"/>
    <property type="evidence" value="ECO:0007669"/>
    <property type="project" value="UniProtKB-UniRule"/>
</dbReference>
<dbReference type="GO" id="GO:0004588">
    <property type="term" value="F:orotate phosphoribosyltransferase activity"/>
    <property type="evidence" value="ECO:0000318"/>
    <property type="project" value="GO_Central"/>
</dbReference>
<dbReference type="GO" id="GO:0006207">
    <property type="term" value="P:'de novo' pyrimidine nucleobase biosynthetic process"/>
    <property type="evidence" value="ECO:0000318"/>
    <property type="project" value="GO_Central"/>
</dbReference>
<dbReference type="GO" id="GO:0044205">
    <property type="term" value="P:'de novo' UMP biosynthetic process"/>
    <property type="evidence" value="ECO:0007669"/>
    <property type="project" value="UniProtKB-UniRule"/>
</dbReference>
<dbReference type="GO" id="GO:0006221">
    <property type="term" value="P:pyrimidine nucleotide biosynthetic process"/>
    <property type="evidence" value="ECO:0000318"/>
    <property type="project" value="GO_Central"/>
</dbReference>
<dbReference type="GO" id="GO:0046132">
    <property type="term" value="P:pyrimidine ribonucleoside biosynthetic process"/>
    <property type="evidence" value="ECO:0000318"/>
    <property type="project" value="GO_Central"/>
</dbReference>
<dbReference type="CDD" id="cd06223">
    <property type="entry name" value="PRTases_typeI"/>
    <property type="match status" value="1"/>
</dbReference>
<dbReference type="FunFam" id="3.40.50.2020:FF:000008">
    <property type="entry name" value="Orotate phosphoribosyltransferase"/>
    <property type="match status" value="1"/>
</dbReference>
<dbReference type="Gene3D" id="3.40.50.2020">
    <property type="match status" value="1"/>
</dbReference>
<dbReference type="HAMAP" id="MF_01208">
    <property type="entry name" value="PyrE"/>
    <property type="match status" value="1"/>
</dbReference>
<dbReference type="InterPro" id="IPR023031">
    <property type="entry name" value="OPRT"/>
</dbReference>
<dbReference type="InterPro" id="IPR004467">
    <property type="entry name" value="Or_phspho_trans_dom"/>
</dbReference>
<dbReference type="InterPro" id="IPR000836">
    <property type="entry name" value="PRibTrfase_dom"/>
</dbReference>
<dbReference type="InterPro" id="IPR029057">
    <property type="entry name" value="PRTase-like"/>
</dbReference>
<dbReference type="NCBIfam" id="TIGR00336">
    <property type="entry name" value="pyrE"/>
    <property type="match status" value="1"/>
</dbReference>
<dbReference type="PANTHER" id="PTHR46683">
    <property type="entry name" value="OROTATE PHOSPHORIBOSYLTRANSFERASE 1-RELATED"/>
    <property type="match status" value="1"/>
</dbReference>
<dbReference type="PANTHER" id="PTHR46683:SF1">
    <property type="entry name" value="OROTATE PHOSPHORIBOSYLTRANSFERASE 1-RELATED"/>
    <property type="match status" value="1"/>
</dbReference>
<dbReference type="Pfam" id="PF00156">
    <property type="entry name" value="Pribosyltran"/>
    <property type="match status" value="1"/>
</dbReference>
<dbReference type="SUPFAM" id="SSF53271">
    <property type="entry name" value="PRTase-like"/>
    <property type="match status" value="1"/>
</dbReference>
<dbReference type="PROSITE" id="PS00103">
    <property type="entry name" value="PUR_PYR_PR_TRANSFER"/>
    <property type="match status" value="1"/>
</dbReference>
<protein>
    <recommendedName>
        <fullName evidence="1">Orotate phosphoribosyltransferase</fullName>
        <shortName evidence="1">OPRT</shortName>
        <shortName evidence="1">OPRTase</shortName>
        <ecNumber evidence="1">2.4.2.10</ecNumber>
    </recommendedName>
</protein>
<proteinExistence type="inferred from homology"/>
<name>PYRE_SHEON</name>
<gene>
    <name evidence="1" type="primary">pyrE</name>
    <name type="ordered locus">SO_4255</name>
</gene>
<reference key="1">
    <citation type="journal article" date="2002" name="Nat. Biotechnol.">
        <title>Genome sequence of the dissimilatory metal ion-reducing bacterium Shewanella oneidensis.</title>
        <authorList>
            <person name="Heidelberg J.F."/>
            <person name="Paulsen I.T."/>
            <person name="Nelson K.E."/>
            <person name="Gaidos E.J."/>
            <person name="Nelson W.C."/>
            <person name="Read T.D."/>
            <person name="Eisen J.A."/>
            <person name="Seshadri R."/>
            <person name="Ward N.L."/>
            <person name="Methe B.A."/>
            <person name="Clayton R.A."/>
            <person name="Meyer T."/>
            <person name="Tsapin A."/>
            <person name="Scott J."/>
            <person name="Beanan M.J."/>
            <person name="Brinkac L.M."/>
            <person name="Daugherty S.C."/>
            <person name="DeBoy R.T."/>
            <person name="Dodson R.J."/>
            <person name="Durkin A.S."/>
            <person name="Haft D.H."/>
            <person name="Kolonay J.F."/>
            <person name="Madupu R."/>
            <person name="Peterson J.D."/>
            <person name="Umayam L.A."/>
            <person name="White O."/>
            <person name="Wolf A.M."/>
            <person name="Vamathevan J.J."/>
            <person name="Weidman J.F."/>
            <person name="Impraim M."/>
            <person name="Lee K."/>
            <person name="Berry K.J."/>
            <person name="Lee C."/>
            <person name="Mueller J."/>
            <person name="Khouri H.M."/>
            <person name="Gill J."/>
            <person name="Utterback T.R."/>
            <person name="McDonald L.A."/>
            <person name="Feldblyum T.V."/>
            <person name="Smith H.O."/>
            <person name="Venter J.C."/>
            <person name="Nealson K.H."/>
            <person name="Fraser C.M."/>
        </authorList>
    </citation>
    <scope>NUCLEOTIDE SEQUENCE [LARGE SCALE GENOMIC DNA]</scope>
    <source>
        <strain>ATCC 700550 / JCM 31522 / CIP 106686 / LMG 19005 / NCIMB 14063 / MR-1</strain>
    </source>
</reference>
<keyword id="KW-0328">Glycosyltransferase</keyword>
<keyword id="KW-0460">Magnesium</keyword>
<keyword id="KW-0665">Pyrimidine biosynthesis</keyword>
<keyword id="KW-1185">Reference proteome</keyword>
<keyword id="KW-0808">Transferase</keyword>
<evidence type="ECO:0000255" key="1">
    <source>
        <dbReference type="HAMAP-Rule" id="MF_01208"/>
    </source>
</evidence>
<comment type="function">
    <text evidence="1">Catalyzes the transfer of a ribosyl phosphate group from 5-phosphoribose 1-diphosphate to orotate, leading to the formation of orotidine monophosphate (OMP).</text>
</comment>
<comment type="catalytic activity">
    <reaction evidence="1">
        <text>orotidine 5'-phosphate + diphosphate = orotate + 5-phospho-alpha-D-ribose 1-diphosphate</text>
        <dbReference type="Rhea" id="RHEA:10380"/>
        <dbReference type="ChEBI" id="CHEBI:30839"/>
        <dbReference type="ChEBI" id="CHEBI:33019"/>
        <dbReference type="ChEBI" id="CHEBI:57538"/>
        <dbReference type="ChEBI" id="CHEBI:58017"/>
        <dbReference type="EC" id="2.4.2.10"/>
    </reaction>
</comment>
<comment type="cofactor">
    <cofactor evidence="1">
        <name>Mg(2+)</name>
        <dbReference type="ChEBI" id="CHEBI:18420"/>
    </cofactor>
</comment>
<comment type="pathway">
    <text evidence="1">Pyrimidine metabolism; UMP biosynthesis via de novo pathway; UMP from orotate: step 1/2.</text>
</comment>
<comment type="subunit">
    <text evidence="1">Homodimer.</text>
</comment>
<comment type="similarity">
    <text evidence="1">Belongs to the purine/pyrimidine phosphoribosyltransferase family. PyrE subfamily.</text>
</comment>